<feature type="chain" id="PRO_0000426854" description="Alpha-1,4-glucan:maltose-1-phosphate maltosyltransferase">
    <location>
        <begin position="1"/>
        <end position="701"/>
    </location>
</feature>
<feature type="region of interest" description="Disordered" evidence="2">
    <location>
        <begin position="286"/>
        <end position="317"/>
    </location>
</feature>
<feature type="active site" description="Nucleophile" evidence="1">
    <location>
        <position position="418"/>
    </location>
</feature>
<feature type="active site" description="Proton donor" evidence="1">
    <location>
        <position position="447"/>
    </location>
</feature>
<feature type="binding site" evidence="1">
    <location>
        <position position="288"/>
    </location>
    <ligand>
        <name>alpha-maltose 1-phosphate</name>
        <dbReference type="ChEBI" id="CHEBI:63576"/>
    </ligand>
</feature>
<feature type="binding site" evidence="1">
    <location>
        <position position="348"/>
    </location>
    <ligand>
        <name>alpha-maltose 1-phosphate</name>
        <dbReference type="ChEBI" id="CHEBI:63576"/>
    </ligand>
</feature>
<feature type="binding site" evidence="1">
    <location>
        <position position="383"/>
    </location>
    <ligand>
        <name>alpha-maltose 1-phosphate</name>
        <dbReference type="ChEBI" id="CHEBI:63576"/>
    </ligand>
</feature>
<feature type="binding site" evidence="1">
    <location>
        <position position="419"/>
    </location>
    <ligand>
        <name>alpha-maltose 1-phosphate</name>
        <dbReference type="ChEBI" id="CHEBI:63576"/>
    </ligand>
</feature>
<feature type="binding site" evidence="1">
    <location>
        <begin position="557"/>
        <end position="558"/>
    </location>
    <ligand>
        <name>alpha-maltose 1-phosphate</name>
        <dbReference type="ChEBI" id="CHEBI:63576"/>
    </ligand>
</feature>
<feature type="site" description="Transition state stabilizer" evidence="1">
    <location>
        <position position="503"/>
    </location>
</feature>
<feature type="strand" evidence="4">
    <location>
        <begin position="17"/>
        <end position="25"/>
    </location>
</feature>
<feature type="helix" evidence="4">
    <location>
        <begin position="28"/>
        <end position="30"/>
    </location>
</feature>
<feature type="strand" evidence="4">
    <location>
        <begin position="34"/>
        <end position="37"/>
    </location>
</feature>
<feature type="strand" evidence="4">
    <location>
        <begin position="42"/>
        <end position="49"/>
    </location>
</feature>
<feature type="strand" evidence="4">
    <location>
        <begin position="57"/>
        <end position="64"/>
    </location>
</feature>
<feature type="strand" evidence="4">
    <location>
        <begin position="94"/>
        <end position="97"/>
    </location>
</feature>
<feature type="strand" evidence="4">
    <location>
        <begin position="106"/>
        <end position="111"/>
    </location>
</feature>
<feature type="strand" evidence="4">
    <location>
        <begin position="115"/>
        <end position="127"/>
    </location>
</feature>
<feature type="helix" evidence="4">
    <location>
        <begin position="129"/>
        <end position="142"/>
    </location>
</feature>
<feature type="helix" evidence="4">
    <location>
        <begin position="153"/>
        <end position="165"/>
    </location>
</feature>
<feature type="turn" evidence="4">
    <location>
        <begin position="170"/>
        <end position="173"/>
    </location>
</feature>
<feature type="helix" evidence="4">
    <location>
        <begin position="174"/>
        <end position="180"/>
    </location>
</feature>
<feature type="strand" evidence="4">
    <location>
        <begin position="182"/>
        <end position="185"/>
    </location>
</feature>
<feature type="helix" evidence="4">
    <location>
        <begin position="190"/>
        <end position="197"/>
    </location>
</feature>
<feature type="helix" evidence="4">
    <location>
        <begin position="199"/>
        <end position="207"/>
    </location>
</feature>
<feature type="strand" evidence="4">
    <location>
        <begin position="212"/>
        <end position="225"/>
    </location>
</feature>
<feature type="helix" evidence="4">
    <location>
        <begin position="227"/>
        <end position="229"/>
    </location>
</feature>
<feature type="strand" evidence="4">
    <location>
        <begin position="231"/>
        <end position="236"/>
    </location>
</feature>
<feature type="helix" evidence="4">
    <location>
        <begin position="239"/>
        <end position="241"/>
    </location>
</feature>
<feature type="strand" evidence="4">
    <location>
        <begin position="247"/>
        <end position="249"/>
    </location>
</feature>
<feature type="helix" evidence="4">
    <location>
        <begin position="256"/>
        <end position="260"/>
    </location>
</feature>
<feature type="helix" evidence="4">
    <location>
        <begin position="263"/>
        <end position="268"/>
    </location>
</feature>
<feature type="strand" evidence="4">
    <location>
        <begin position="272"/>
        <end position="276"/>
    </location>
</feature>
<feature type="strand" evidence="4">
    <location>
        <begin position="284"/>
        <end position="286"/>
    </location>
</feature>
<feature type="helix" evidence="4">
    <location>
        <begin position="290"/>
        <end position="292"/>
    </location>
</feature>
<feature type="strand" evidence="4">
    <location>
        <begin position="293"/>
        <end position="295"/>
    </location>
</feature>
<feature type="turn" evidence="4">
    <location>
        <begin position="319"/>
        <end position="321"/>
    </location>
</feature>
<feature type="helix" evidence="4">
    <location>
        <begin position="324"/>
        <end position="336"/>
    </location>
</feature>
<feature type="strand" evidence="4">
    <location>
        <begin position="340"/>
        <end position="345"/>
    </location>
</feature>
<feature type="helix" evidence="4">
    <location>
        <begin position="354"/>
        <end position="358"/>
    </location>
</feature>
<feature type="strand" evidence="4">
    <location>
        <begin position="374"/>
        <end position="376"/>
    </location>
</feature>
<feature type="strand" evidence="4">
    <location>
        <begin position="379"/>
        <end position="381"/>
    </location>
</feature>
<feature type="turn" evidence="4">
    <location>
        <begin position="389"/>
        <end position="391"/>
    </location>
</feature>
<feature type="helix" evidence="4">
    <location>
        <begin position="393"/>
        <end position="408"/>
    </location>
</feature>
<feature type="turn" evidence="4">
    <location>
        <begin position="409"/>
        <end position="411"/>
    </location>
</feature>
<feature type="strand" evidence="4">
    <location>
        <begin position="414"/>
        <end position="419"/>
    </location>
</feature>
<feature type="helix" evidence="4">
    <location>
        <begin position="420"/>
        <end position="422"/>
    </location>
</feature>
<feature type="helix" evidence="4">
    <location>
        <begin position="425"/>
        <end position="438"/>
    </location>
</feature>
<feature type="strand" evidence="4">
    <location>
        <begin position="443"/>
        <end position="447"/>
    </location>
</feature>
<feature type="helix" evidence="4">
    <location>
        <begin position="452"/>
        <end position="460"/>
    </location>
</feature>
<feature type="strand" evidence="4">
    <location>
        <begin position="464"/>
        <end position="466"/>
    </location>
</feature>
<feature type="helix" evidence="4">
    <location>
        <begin position="469"/>
        <end position="472"/>
    </location>
</feature>
<feature type="helix" evidence="4">
    <location>
        <begin position="476"/>
        <end position="486"/>
    </location>
</feature>
<feature type="helix" evidence="4">
    <location>
        <begin position="489"/>
        <end position="491"/>
    </location>
</feature>
<feature type="strand" evidence="4">
    <location>
        <begin position="495"/>
        <end position="499"/>
    </location>
</feature>
<feature type="helix" evidence="4">
    <location>
        <begin position="507"/>
        <end position="511"/>
    </location>
</feature>
<feature type="helix" evidence="4">
    <location>
        <begin position="513"/>
        <end position="527"/>
    </location>
</feature>
<feature type="strand" evidence="4">
    <location>
        <begin position="529"/>
        <end position="534"/>
    </location>
</feature>
<feature type="helix" evidence="4">
    <location>
        <begin position="537"/>
        <end position="539"/>
    </location>
</feature>
<feature type="strand" evidence="4">
    <location>
        <begin position="544"/>
        <end position="546"/>
    </location>
</feature>
<feature type="turn" evidence="4">
    <location>
        <begin position="556"/>
        <end position="558"/>
    </location>
</feature>
<feature type="helix" evidence="4">
    <location>
        <begin position="565"/>
        <end position="570"/>
    </location>
</feature>
<feature type="helix" evidence="4">
    <location>
        <begin position="576"/>
        <end position="588"/>
    </location>
</feature>
<feature type="helix" evidence="4">
    <location>
        <begin position="590"/>
        <end position="593"/>
    </location>
</feature>
<feature type="strand" evidence="4">
    <location>
        <begin position="599"/>
        <end position="604"/>
    </location>
</feature>
<feature type="strand" evidence="4">
    <location>
        <begin position="608"/>
        <end position="614"/>
    </location>
</feature>
<feature type="turn" evidence="4">
    <location>
        <begin position="616"/>
        <end position="618"/>
    </location>
</feature>
<feature type="strand" evidence="4">
    <location>
        <begin position="621"/>
        <end position="628"/>
    </location>
</feature>
<feature type="strand" evidence="4">
    <location>
        <begin position="630"/>
        <end position="632"/>
    </location>
</feature>
<feature type="strand" evidence="4">
    <location>
        <begin position="634"/>
        <end position="639"/>
    </location>
</feature>
<feature type="helix" evidence="4">
    <location>
        <begin position="642"/>
        <end position="645"/>
    </location>
</feature>
<feature type="strand" evidence="4">
    <location>
        <begin position="653"/>
        <end position="657"/>
    </location>
</feature>
<feature type="turn" evidence="4">
    <location>
        <begin position="658"/>
        <end position="660"/>
    </location>
</feature>
<feature type="strand" evidence="4">
    <location>
        <begin position="663"/>
        <end position="666"/>
    </location>
</feature>
<feature type="strand" evidence="4">
    <location>
        <begin position="668"/>
        <end position="674"/>
    </location>
</feature>
<feature type="turn" evidence="4">
    <location>
        <begin position="676"/>
        <end position="678"/>
    </location>
</feature>
<feature type="strand" evidence="4">
    <location>
        <begin position="680"/>
        <end position="685"/>
    </location>
</feature>
<feature type="helix" evidence="4">
    <location>
        <begin position="694"/>
        <end position="697"/>
    </location>
</feature>
<proteinExistence type="evidence at protein level"/>
<accession>P9WQ16</accession>
<accession>L0T7Y4</accession>
<accession>P63531</accession>
<accession>Q10638</accession>
<evidence type="ECO:0000250" key="1"/>
<evidence type="ECO:0000256" key="2">
    <source>
        <dbReference type="SAM" id="MobiDB-lite"/>
    </source>
</evidence>
<evidence type="ECO:0000305" key="3"/>
<evidence type="ECO:0007829" key="4">
    <source>
        <dbReference type="PDB" id="4U33"/>
    </source>
</evidence>
<comment type="function">
    <text evidence="1">Essential maltosyltransferase that uses maltose 1-phosphate (M1P) as the sugar donor to elongate linear or branched alpha-(1-&gt;4)-glucans. Maltooligosaccharides with a degree of polymerization (DP) superior or equal to 4 are efficient acceptors, with DP5 being optimal in the GlgE-catalyzed polymerization with M1P. Is specific for the alpha-anomer of M1P as substrate, since the beta-anomer of M1P gives no activity. Exhibits an alpha-retaining catalytic mechanism. Is also able to catalyze the reverse reaction in vitro, releasing M1P from glycogen in the presence of inorganic phosphate. Also catalyzes disproportionation reactions through maltosyl transfer between maltooligosaccharides. Is involved in a branched alpha-glucan biosynthetic pathway from trehalose, together with TreS, Mak and GlgB (By similarity).</text>
</comment>
<comment type="catalytic activity">
    <reaction>
        <text>alpha-maltose 1-phosphate + [(1-&gt;4)-alpha-D-glucosyl](n) = [(1-&gt;4)-alpha-D-glucosyl](n+2) + phosphate</text>
        <dbReference type="Rhea" id="RHEA:42692"/>
        <dbReference type="Rhea" id="RHEA-COMP:9584"/>
        <dbReference type="Rhea" id="RHEA-COMP:10183"/>
        <dbReference type="ChEBI" id="CHEBI:15444"/>
        <dbReference type="ChEBI" id="CHEBI:43474"/>
        <dbReference type="ChEBI" id="CHEBI:63576"/>
        <dbReference type="EC" id="2.4.99.16"/>
    </reaction>
</comment>
<comment type="pathway">
    <text>Glycan biosynthesis; glycogen biosynthesis.</text>
</comment>
<comment type="subunit">
    <text evidence="1">Homodimer.</text>
</comment>
<comment type="similarity">
    <text evidence="3">Belongs to the glycosyl hydrolase 13 family. GlgE subfamily.</text>
</comment>
<comment type="sequence caution" evidence="3">
    <conflict type="erroneous initiation">
        <sequence resource="EMBL-CDS" id="AAK45633"/>
    </conflict>
    <text>Extended N-terminus.</text>
</comment>
<keyword id="KW-0002">3D-structure</keyword>
<keyword id="KW-0119">Carbohydrate metabolism</keyword>
<keyword id="KW-0320">Glycogen biosynthesis</keyword>
<keyword id="KW-0321">Glycogen metabolism</keyword>
<keyword id="KW-0328">Glycosyltransferase</keyword>
<keyword id="KW-1185">Reference proteome</keyword>
<keyword id="KW-0808">Transferase</keyword>
<sequence>MSGRAIGTETEWWVPGRVEIDDVAPVVSCGVYPAKAVVGEVVPVSAAVWREGHEAVAATLVVRYLGVRYPHLTDRPRARVLPTPSEPQQRVKPLLIPMTSGQEPFVFHGQFTPDRVGLWTFRVDGWGDPIHTWRHGLIAKLDAGQGETELSNDLLVGAVLLERAATGVPRGLRDPLLAAAAALRTPGDPVTRTALALTPEIEELLADYPLRDLVTRGEQFGVWVDRPLARFGAWYEMFPRSTGGWDDDGNPVHGTFATAAAELPRIAGMGFDVVYLPPIHPIGKVHRKGRNNSPTAAPTDVGSPWAIGSDEGGHDTVHPSLGTIDDFDDFVSAARDLGMEVALDLALQCAPDHPWAREHRQWFTELPDGTIAYAENPPKKYQDIYPLNFDNDPEGLYDEVLRVVQHWVNHGVKFFRVDNPHTKPPNFWAWLIAQVKTVDPDVLFLSEAFTPPARQYGLAKLGFTQSYSYFTWRTTKWELTEFGNQIAELADYRRPNLFVNTPDILHAVLQHNGPGMFAIRAVLAATMSPAWGMYCGYELFEHRAVREGSEEYLDSEKYELRPRDFASALDQGRSLQPFITRLNIIRRLHPAFQQLRTIHFHHVDNDALLAYSKFDPATGDCVLVVVTLNAFGPEEATLWLDMAALGMEDYDRFWVRDEITGEEYQWGQANYIRIDPARAVAHIINMPAVPYESRNTLLRRR</sequence>
<name>GLGE_MYCTO</name>
<protein>
    <recommendedName>
        <fullName>Alpha-1,4-glucan:maltose-1-phosphate maltosyltransferase</fullName>
        <shortName>GMPMT</shortName>
        <ecNumber>2.4.99.16</ecNumber>
    </recommendedName>
    <alternativeName>
        <fullName>(1-&gt;4)-alpha-D-glucan:maltose-1-phosphate alpha-D-maltosyltransferase</fullName>
    </alternativeName>
    <alternativeName>
        <fullName>(1-&gt;4)-alpha-D-glucan:phosphate alpha-D-maltosyltransferase</fullName>
    </alternativeName>
</protein>
<organism>
    <name type="scientific">Mycobacterium tuberculosis (strain CDC 1551 / Oshkosh)</name>
    <dbReference type="NCBI Taxonomy" id="83331"/>
    <lineage>
        <taxon>Bacteria</taxon>
        <taxon>Bacillati</taxon>
        <taxon>Actinomycetota</taxon>
        <taxon>Actinomycetes</taxon>
        <taxon>Mycobacteriales</taxon>
        <taxon>Mycobacteriaceae</taxon>
        <taxon>Mycobacterium</taxon>
        <taxon>Mycobacterium tuberculosis complex</taxon>
    </lineage>
</organism>
<dbReference type="EC" id="2.4.99.16"/>
<dbReference type="EMBL" id="AE000516">
    <property type="protein sequence ID" value="AAK45633.1"/>
    <property type="status" value="ALT_INIT"/>
    <property type="molecule type" value="Genomic_DNA"/>
</dbReference>
<dbReference type="PIR" id="C70770">
    <property type="entry name" value="C70770"/>
</dbReference>
<dbReference type="PDB" id="4U33">
    <property type="method" value="X-ray"/>
    <property type="resolution" value="3.29 A"/>
    <property type="chains" value="A/B/C/D/E/F=1-701"/>
</dbReference>
<dbReference type="PDB" id="4U3C">
    <property type="method" value="X-ray"/>
    <property type="resolution" value="3.98 A"/>
    <property type="chains" value="A/B/C/D/E/F=1-701"/>
</dbReference>
<dbReference type="PDBsum" id="4U33"/>
<dbReference type="PDBsum" id="4U3C"/>
<dbReference type="SMR" id="P9WQ16"/>
<dbReference type="CAZy" id="GH13">
    <property type="family name" value="Glycoside Hydrolase Family 13"/>
</dbReference>
<dbReference type="KEGG" id="mtc:MT1369"/>
<dbReference type="PATRIC" id="fig|83331.31.peg.1476"/>
<dbReference type="HOGENOM" id="CLU_015798_0_0_11"/>
<dbReference type="UniPathway" id="UPA00164"/>
<dbReference type="EvolutionaryTrace" id="P9WQ16"/>
<dbReference type="Proteomes" id="UP000001020">
    <property type="component" value="Chromosome"/>
</dbReference>
<dbReference type="GO" id="GO:0016758">
    <property type="term" value="F:hexosyltransferase activity"/>
    <property type="evidence" value="ECO:0007669"/>
    <property type="project" value="UniProtKB-UniRule"/>
</dbReference>
<dbReference type="GO" id="GO:0004553">
    <property type="term" value="F:hydrolase activity, hydrolyzing O-glycosyl compounds"/>
    <property type="evidence" value="ECO:0007669"/>
    <property type="project" value="InterPro"/>
</dbReference>
<dbReference type="GO" id="GO:0030979">
    <property type="term" value="P:alpha-glucan biosynthetic process"/>
    <property type="evidence" value="ECO:0007669"/>
    <property type="project" value="UniProtKB-UniRule"/>
</dbReference>
<dbReference type="GO" id="GO:0005978">
    <property type="term" value="P:glycogen biosynthetic process"/>
    <property type="evidence" value="ECO:0007669"/>
    <property type="project" value="UniProtKB-UniRule"/>
</dbReference>
<dbReference type="CDD" id="cd11344">
    <property type="entry name" value="AmyAc_GlgE_like"/>
    <property type="match status" value="1"/>
</dbReference>
<dbReference type="FunFam" id="2.60.40.1180:FF:000061">
    <property type="entry name" value="Alpha-1,4-glucan:maltose-1-phosphate maltosyltransferase"/>
    <property type="match status" value="1"/>
</dbReference>
<dbReference type="FunFam" id="3.20.20.80:FF:000187">
    <property type="entry name" value="Alpha-1,4-glucan:maltose-1-phosphate maltosyltransferase"/>
    <property type="match status" value="1"/>
</dbReference>
<dbReference type="Gene3D" id="3.20.20.80">
    <property type="entry name" value="Glycosidases"/>
    <property type="match status" value="1"/>
</dbReference>
<dbReference type="Gene3D" id="2.60.40.1180">
    <property type="entry name" value="Golgi alpha-mannosidase II"/>
    <property type="match status" value="1"/>
</dbReference>
<dbReference type="Gene3D" id="2.60.40.10">
    <property type="entry name" value="Immunoglobulins"/>
    <property type="match status" value="1"/>
</dbReference>
<dbReference type="Gene3D" id="1.20.58.80">
    <property type="entry name" value="Phosphotransferase system, lactose/cellobiose-type IIA subunit"/>
    <property type="match status" value="1"/>
</dbReference>
<dbReference type="HAMAP" id="MF_02124">
    <property type="entry name" value="GlgE"/>
    <property type="match status" value="1"/>
</dbReference>
<dbReference type="InterPro" id="IPR026585">
    <property type="entry name" value="GlgE"/>
</dbReference>
<dbReference type="InterPro" id="IPR049171">
    <property type="entry name" value="GLGE_C"/>
</dbReference>
<dbReference type="InterPro" id="IPR021828">
    <property type="entry name" value="GlgE_dom_N/S"/>
</dbReference>
<dbReference type="InterPro" id="IPR006047">
    <property type="entry name" value="Glyco_hydro_13_cat_dom"/>
</dbReference>
<dbReference type="InterPro" id="IPR013780">
    <property type="entry name" value="Glyco_hydro_b"/>
</dbReference>
<dbReference type="InterPro" id="IPR017853">
    <property type="entry name" value="Glycoside_hydrolase_SF"/>
</dbReference>
<dbReference type="InterPro" id="IPR013783">
    <property type="entry name" value="Ig-like_fold"/>
</dbReference>
<dbReference type="PANTHER" id="PTHR47786">
    <property type="entry name" value="ALPHA-1,4-GLUCAN:MALTOSE-1-PHOSPHATE MALTOSYLTRANSFERASE"/>
    <property type="match status" value="1"/>
</dbReference>
<dbReference type="PANTHER" id="PTHR47786:SF2">
    <property type="entry name" value="GLYCOSYL HYDROLASE FAMILY 13 CATALYTIC DOMAIN-CONTAINING PROTEIN"/>
    <property type="match status" value="1"/>
</dbReference>
<dbReference type="Pfam" id="PF00128">
    <property type="entry name" value="Alpha-amylase"/>
    <property type="match status" value="1"/>
</dbReference>
<dbReference type="Pfam" id="PF21702">
    <property type="entry name" value="GLGE_C"/>
    <property type="match status" value="1"/>
</dbReference>
<dbReference type="Pfam" id="PF11896">
    <property type="entry name" value="GlgE_dom_N_S"/>
    <property type="match status" value="1"/>
</dbReference>
<dbReference type="SMART" id="SM00642">
    <property type="entry name" value="Aamy"/>
    <property type="match status" value="1"/>
</dbReference>
<dbReference type="SUPFAM" id="SSF51445">
    <property type="entry name" value="(Trans)glycosidases"/>
    <property type="match status" value="1"/>
</dbReference>
<reference key="1">
    <citation type="journal article" date="2002" name="J. Bacteriol.">
        <title>Whole-genome comparison of Mycobacterium tuberculosis clinical and laboratory strains.</title>
        <authorList>
            <person name="Fleischmann R.D."/>
            <person name="Alland D."/>
            <person name="Eisen J.A."/>
            <person name="Carpenter L."/>
            <person name="White O."/>
            <person name="Peterson J.D."/>
            <person name="DeBoy R.T."/>
            <person name="Dodson R.J."/>
            <person name="Gwinn M.L."/>
            <person name="Haft D.H."/>
            <person name="Hickey E.K."/>
            <person name="Kolonay J.F."/>
            <person name="Nelson W.C."/>
            <person name="Umayam L.A."/>
            <person name="Ermolaeva M.D."/>
            <person name="Salzberg S.L."/>
            <person name="Delcher A."/>
            <person name="Utterback T.R."/>
            <person name="Weidman J.F."/>
            <person name="Khouri H.M."/>
            <person name="Gill J."/>
            <person name="Mikula A."/>
            <person name="Bishai W."/>
            <person name="Jacobs W.R. Jr."/>
            <person name="Venter J.C."/>
            <person name="Fraser C.M."/>
        </authorList>
    </citation>
    <scope>NUCLEOTIDE SEQUENCE [LARGE SCALE GENOMIC DNA]</scope>
    <source>
        <strain>CDC 1551 / Oshkosh</strain>
    </source>
</reference>
<gene>
    <name type="primary">glgE</name>
    <name type="ordered locus">MT1369</name>
</gene>